<keyword id="KW-0963">Cytoplasm</keyword>
<keyword id="KW-0227">DNA damage</keyword>
<keyword id="KW-0228">DNA excision</keyword>
<keyword id="KW-0234">DNA repair</keyword>
<keyword id="KW-0267">Excision nuclease</keyword>
<keyword id="KW-1185">Reference proteome</keyword>
<keyword id="KW-0742">SOS response</keyword>
<organism>
    <name type="scientific">Synechococcus sp. (strain CC9902)</name>
    <dbReference type="NCBI Taxonomy" id="316279"/>
    <lineage>
        <taxon>Bacteria</taxon>
        <taxon>Bacillati</taxon>
        <taxon>Cyanobacteriota</taxon>
        <taxon>Cyanophyceae</taxon>
        <taxon>Synechococcales</taxon>
        <taxon>Synechococcaceae</taxon>
        <taxon>Synechococcus</taxon>
    </lineage>
</organism>
<accession>Q3AXU8</accession>
<feature type="chain" id="PRO_0000264964" description="UvrABC system protein C">
    <location>
        <begin position="1"/>
        <end position="661"/>
    </location>
</feature>
<feature type="domain" description="GIY-YIG" evidence="1">
    <location>
        <begin position="26"/>
        <end position="105"/>
    </location>
</feature>
<feature type="domain" description="UVR" evidence="1">
    <location>
        <begin position="215"/>
        <end position="250"/>
    </location>
</feature>
<evidence type="ECO:0000255" key="1">
    <source>
        <dbReference type="HAMAP-Rule" id="MF_00203"/>
    </source>
</evidence>
<evidence type="ECO:0000305" key="2"/>
<reference key="1">
    <citation type="submission" date="2005-08" db="EMBL/GenBank/DDBJ databases">
        <title>Complete sequence of Synechococcus sp. CC9902.</title>
        <authorList>
            <person name="Copeland A."/>
            <person name="Lucas S."/>
            <person name="Lapidus A."/>
            <person name="Barry K."/>
            <person name="Detter J.C."/>
            <person name="Glavina T."/>
            <person name="Hammon N."/>
            <person name="Israni S."/>
            <person name="Pitluck S."/>
            <person name="Martinez M."/>
            <person name="Schmutz J."/>
            <person name="Larimer F."/>
            <person name="Land M."/>
            <person name="Kyrpides N."/>
            <person name="Ivanova N."/>
            <person name="Richardson P."/>
        </authorList>
    </citation>
    <scope>NUCLEOTIDE SEQUENCE [LARGE SCALE GENOMIC DNA]</scope>
    <source>
        <strain>CC9902</strain>
    </source>
</reference>
<name>UVRC_SYNS9</name>
<proteinExistence type="inferred from homology"/>
<dbReference type="EMBL" id="CP000097">
    <property type="protein sequence ID" value="ABB26079.1"/>
    <property type="status" value="ALT_INIT"/>
    <property type="molecule type" value="Genomic_DNA"/>
</dbReference>
<dbReference type="SMR" id="Q3AXU8"/>
<dbReference type="STRING" id="316279.Syncc9902_1115"/>
<dbReference type="KEGG" id="sye:Syncc9902_1115"/>
<dbReference type="eggNOG" id="COG0322">
    <property type="taxonomic scope" value="Bacteria"/>
</dbReference>
<dbReference type="HOGENOM" id="CLU_014841_3_2_3"/>
<dbReference type="OrthoDB" id="9804933at2"/>
<dbReference type="Proteomes" id="UP000002712">
    <property type="component" value="Chromosome"/>
</dbReference>
<dbReference type="GO" id="GO:0005737">
    <property type="term" value="C:cytoplasm"/>
    <property type="evidence" value="ECO:0007669"/>
    <property type="project" value="UniProtKB-SubCell"/>
</dbReference>
<dbReference type="GO" id="GO:0009380">
    <property type="term" value="C:excinuclease repair complex"/>
    <property type="evidence" value="ECO:0007669"/>
    <property type="project" value="InterPro"/>
</dbReference>
<dbReference type="GO" id="GO:0003677">
    <property type="term" value="F:DNA binding"/>
    <property type="evidence" value="ECO:0007669"/>
    <property type="project" value="UniProtKB-UniRule"/>
</dbReference>
<dbReference type="GO" id="GO:0009381">
    <property type="term" value="F:excinuclease ABC activity"/>
    <property type="evidence" value="ECO:0007669"/>
    <property type="project" value="UniProtKB-UniRule"/>
</dbReference>
<dbReference type="GO" id="GO:0006289">
    <property type="term" value="P:nucleotide-excision repair"/>
    <property type="evidence" value="ECO:0007669"/>
    <property type="project" value="UniProtKB-UniRule"/>
</dbReference>
<dbReference type="GO" id="GO:0009432">
    <property type="term" value="P:SOS response"/>
    <property type="evidence" value="ECO:0007669"/>
    <property type="project" value="UniProtKB-UniRule"/>
</dbReference>
<dbReference type="CDD" id="cd10434">
    <property type="entry name" value="GIY-YIG_UvrC_Cho"/>
    <property type="match status" value="1"/>
</dbReference>
<dbReference type="FunFam" id="3.40.1440.10:FF:000001">
    <property type="entry name" value="UvrABC system protein C"/>
    <property type="match status" value="1"/>
</dbReference>
<dbReference type="Gene3D" id="1.10.150.20">
    <property type="entry name" value="5' to 3' exonuclease, C-terminal subdomain"/>
    <property type="match status" value="1"/>
</dbReference>
<dbReference type="Gene3D" id="3.40.1440.10">
    <property type="entry name" value="GIY-YIG endonuclease"/>
    <property type="match status" value="1"/>
</dbReference>
<dbReference type="Gene3D" id="4.10.860.10">
    <property type="entry name" value="UVR domain"/>
    <property type="match status" value="1"/>
</dbReference>
<dbReference type="Gene3D" id="3.30.420.340">
    <property type="entry name" value="UvrC, RNAse H endonuclease domain"/>
    <property type="match status" value="1"/>
</dbReference>
<dbReference type="HAMAP" id="MF_00203">
    <property type="entry name" value="UvrC"/>
    <property type="match status" value="1"/>
</dbReference>
<dbReference type="InterPro" id="IPR000305">
    <property type="entry name" value="GIY-YIG_endonuc"/>
</dbReference>
<dbReference type="InterPro" id="IPR035901">
    <property type="entry name" value="GIY-YIG_endonuc_sf"/>
</dbReference>
<dbReference type="InterPro" id="IPR047296">
    <property type="entry name" value="GIY-YIG_UvrC_Cho"/>
</dbReference>
<dbReference type="InterPro" id="IPR003583">
    <property type="entry name" value="Hlx-hairpin-Hlx_DNA-bd_motif"/>
</dbReference>
<dbReference type="InterPro" id="IPR010994">
    <property type="entry name" value="RuvA_2-like"/>
</dbReference>
<dbReference type="InterPro" id="IPR001943">
    <property type="entry name" value="UVR_dom"/>
</dbReference>
<dbReference type="InterPro" id="IPR036876">
    <property type="entry name" value="UVR_dom_sf"/>
</dbReference>
<dbReference type="InterPro" id="IPR050066">
    <property type="entry name" value="UvrABC_protein_C"/>
</dbReference>
<dbReference type="InterPro" id="IPR004791">
    <property type="entry name" value="UvrC"/>
</dbReference>
<dbReference type="InterPro" id="IPR001162">
    <property type="entry name" value="UvrC_RNase_H_dom"/>
</dbReference>
<dbReference type="InterPro" id="IPR038476">
    <property type="entry name" value="UvrC_RNase_H_dom_sf"/>
</dbReference>
<dbReference type="NCBIfam" id="NF001824">
    <property type="entry name" value="PRK00558.1-5"/>
    <property type="match status" value="1"/>
</dbReference>
<dbReference type="NCBIfam" id="TIGR00194">
    <property type="entry name" value="uvrC"/>
    <property type="match status" value="1"/>
</dbReference>
<dbReference type="PANTHER" id="PTHR30562:SF1">
    <property type="entry name" value="UVRABC SYSTEM PROTEIN C"/>
    <property type="match status" value="1"/>
</dbReference>
<dbReference type="PANTHER" id="PTHR30562">
    <property type="entry name" value="UVRC/OXIDOREDUCTASE"/>
    <property type="match status" value="1"/>
</dbReference>
<dbReference type="Pfam" id="PF01541">
    <property type="entry name" value="GIY-YIG"/>
    <property type="match status" value="1"/>
</dbReference>
<dbReference type="Pfam" id="PF14520">
    <property type="entry name" value="HHH_5"/>
    <property type="match status" value="1"/>
</dbReference>
<dbReference type="Pfam" id="PF02151">
    <property type="entry name" value="UVR"/>
    <property type="match status" value="1"/>
</dbReference>
<dbReference type="Pfam" id="PF22920">
    <property type="entry name" value="UvrC_RNaseH"/>
    <property type="match status" value="1"/>
</dbReference>
<dbReference type="Pfam" id="PF08459">
    <property type="entry name" value="UvrC_RNaseH_dom"/>
    <property type="match status" value="1"/>
</dbReference>
<dbReference type="SMART" id="SM00465">
    <property type="entry name" value="GIYc"/>
    <property type="match status" value="1"/>
</dbReference>
<dbReference type="SMART" id="SM00278">
    <property type="entry name" value="HhH1"/>
    <property type="match status" value="2"/>
</dbReference>
<dbReference type="SUPFAM" id="SSF46600">
    <property type="entry name" value="C-terminal UvrC-binding domain of UvrB"/>
    <property type="match status" value="1"/>
</dbReference>
<dbReference type="SUPFAM" id="SSF82771">
    <property type="entry name" value="GIY-YIG endonuclease"/>
    <property type="match status" value="1"/>
</dbReference>
<dbReference type="SUPFAM" id="SSF47781">
    <property type="entry name" value="RuvA domain 2-like"/>
    <property type="match status" value="1"/>
</dbReference>
<dbReference type="PROSITE" id="PS50164">
    <property type="entry name" value="GIY_YIG"/>
    <property type="match status" value="1"/>
</dbReference>
<dbReference type="PROSITE" id="PS50151">
    <property type="entry name" value="UVR"/>
    <property type="match status" value="1"/>
</dbReference>
<dbReference type="PROSITE" id="PS50165">
    <property type="entry name" value="UVRC"/>
    <property type="match status" value="1"/>
</dbReference>
<gene>
    <name evidence="1" type="primary">uvrC</name>
    <name type="ordered locus">Syncc9902_1115</name>
</gene>
<comment type="function">
    <text evidence="1">The UvrABC repair system catalyzes the recognition and processing of DNA lesions. UvrC both incises the 5' and 3' sides of the lesion. The N-terminal half is responsible for the 3' incision and the C-terminal half is responsible for the 5' incision.</text>
</comment>
<comment type="subunit">
    <text evidence="1">Interacts with UvrB in an incision complex.</text>
</comment>
<comment type="subcellular location">
    <subcellularLocation>
        <location evidence="1">Cytoplasm</location>
    </subcellularLocation>
</comment>
<comment type="similarity">
    <text evidence="1">Belongs to the UvrC family.</text>
</comment>
<comment type="sequence caution" evidence="2">
    <conflict type="erroneous initiation">
        <sequence resource="EMBL-CDS" id="ABB26079"/>
    </conflict>
</comment>
<protein>
    <recommendedName>
        <fullName evidence="1">UvrABC system protein C</fullName>
        <shortName evidence="1">Protein UvrC</shortName>
    </recommendedName>
    <alternativeName>
        <fullName evidence="1">Excinuclease ABC subunit C</fullName>
    </alternativeName>
</protein>
<sequence length="661" mass="75497">MADSISGTPLLTQPERLERRLKDIPAEPGCYLMRDGDDRILYVGKSKTLRSRVRSYFRSRHDLSPRIRLMTRQVCEIEFIVTDSEAEALALESNLIKNHQPHFNVLLKDDKKYPYLCITWSESYPRIFITRRRRFRSPLDRFYGPYVDVGLLRRTLFLVKRVFPLRQRPRPLHQDRTCLNYSIGRCPGVCQEKISSDDYHQTLRKVAMVFQGRSDELQNLLQEQMHKYADRTDYESAARVRDQLQGLDQLTADQKMSLPDSSVSRDVLALACDERLAAVQLFQMRAGKLVGRLGYTADAAGLSPGLILQRVIEEHYSQVDAVEVPPQLLVQHPLPQQSLLEEWLTEQRERKVQIHCPQRRQKADLIELVQRNAEFELLRAKQGQEQQALSTEDLAQLLDLPLPPRRIEGYDISHIQGSDAVASQVVFIDGLPAKQHYRKYKIQSSSIRAGHSDDFMAMAEIMRRRFRRWARAKADGLDLGALRQKGGSALQTDGLNDWPDLVMIDGGKGQLSAVMEALRELNLHDDLNVCSLAKQREEVFLPGESQPLESEADQLGVALLRRLRDEAHRFAVSFHRQQRGERMKRSRLSDIPGLGAKRVRDLLSHFHSIDAIQLASVDTLSKAPGVGPVLAQDIFNFFHPTDENDGLPSSQLEGEQLEHSA</sequence>